<organism>
    <name type="scientific">Gloeobacter violaceus (strain ATCC 29082 / PCC 7421)</name>
    <dbReference type="NCBI Taxonomy" id="251221"/>
    <lineage>
        <taxon>Bacteria</taxon>
        <taxon>Bacillati</taxon>
        <taxon>Cyanobacteriota</taxon>
        <taxon>Cyanophyceae</taxon>
        <taxon>Gloeobacterales</taxon>
        <taxon>Gloeobacteraceae</taxon>
        <taxon>Gloeobacter</taxon>
    </lineage>
</organism>
<protein>
    <recommendedName>
        <fullName evidence="1">Fluoride-specific ion channel FluC</fullName>
    </recommendedName>
</protein>
<accession>Q7NIH2</accession>
<keyword id="KW-0997">Cell inner membrane</keyword>
<keyword id="KW-1003">Cell membrane</keyword>
<keyword id="KW-0407">Ion channel</keyword>
<keyword id="KW-0406">Ion transport</keyword>
<keyword id="KW-0472">Membrane</keyword>
<keyword id="KW-0479">Metal-binding</keyword>
<keyword id="KW-1185">Reference proteome</keyword>
<keyword id="KW-0915">Sodium</keyword>
<keyword id="KW-0812">Transmembrane</keyword>
<keyword id="KW-1133">Transmembrane helix</keyword>
<keyword id="KW-0813">Transport</keyword>
<proteinExistence type="inferred from homology"/>
<sequence>MVRESVLVMVGGALGSLARYWVGLGISQWAGAPPFLFGTLLVNLVGSFMLGGLFAWSVALRIDPALLLLAGTGFCGGFTTFSALSIECLVLLQKGDYPTAMGYLLGSLLGGLAAGWAGYLAAKAL</sequence>
<comment type="function">
    <text evidence="1">Fluoride-specific ion channel. Important for reducing fluoride concentration in the cell, thus reducing its toxicity.</text>
</comment>
<comment type="catalytic activity">
    <reaction evidence="1">
        <text>fluoride(in) = fluoride(out)</text>
        <dbReference type="Rhea" id="RHEA:76159"/>
        <dbReference type="ChEBI" id="CHEBI:17051"/>
    </reaction>
    <physiologicalReaction direction="left-to-right" evidence="1">
        <dbReference type="Rhea" id="RHEA:76160"/>
    </physiologicalReaction>
</comment>
<comment type="activity regulation">
    <text evidence="1">Na(+) is not transported, but it plays an essential structural role and its presence is essential for fluoride channel function.</text>
</comment>
<comment type="subcellular location">
    <subcellularLocation>
        <location evidence="1">Cell inner membrane</location>
        <topology evidence="1">Multi-pass membrane protein</topology>
    </subcellularLocation>
</comment>
<comment type="similarity">
    <text evidence="1">Belongs to the fluoride channel Fluc/FEX (TC 1.A.43) family.</text>
</comment>
<feature type="chain" id="PRO_0000110105" description="Fluoride-specific ion channel FluC">
    <location>
        <begin position="1"/>
        <end position="125"/>
    </location>
</feature>
<feature type="transmembrane region" description="Helical" evidence="1">
    <location>
        <begin position="6"/>
        <end position="26"/>
    </location>
</feature>
<feature type="transmembrane region" description="Helical" evidence="1">
    <location>
        <begin position="35"/>
        <end position="55"/>
    </location>
</feature>
<feature type="transmembrane region" description="Helical" evidence="1">
    <location>
        <begin position="66"/>
        <end position="86"/>
    </location>
</feature>
<feature type="transmembrane region" description="Helical" evidence="1">
    <location>
        <begin position="100"/>
        <end position="120"/>
    </location>
</feature>
<feature type="binding site" evidence="1">
    <location>
        <position position="76"/>
    </location>
    <ligand>
        <name>Na(+)</name>
        <dbReference type="ChEBI" id="CHEBI:29101"/>
        <note>structural</note>
    </ligand>
</feature>
<feature type="binding site" evidence="1">
    <location>
        <position position="79"/>
    </location>
    <ligand>
        <name>Na(+)</name>
        <dbReference type="ChEBI" id="CHEBI:29101"/>
        <note>structural</note>
    </ligand>
</feature>
<reference key="1">
    <citation type="journal article" date="2003" name="DNA Res.">
        <title>Complete genome structure of Gloeobacter violaceus PCC 7421, a cyanobacterium that lacks thylakoids.</title>
        <authorList>
            <person name="Nakamura Y."/>
            <person name="Kaneko T."/>
            <person name="Sato S."/>
            <person name="Mimuro M."/>
            <person name="Miyashita H."/>
            <person name="Tsuchiya T."/>
            <person name="Sasamoto S."/>
            <person name="Watanabe A."/>
            <person name="Kawashima K."/>
            <person name="Kishida Y."/>
            <person name="Kiyokawa C."/>
            <person name="Kohara M."/>
            <person name="Matsumoto M."/>
            <person name="Matsuno A."/>
            <person name="Nakazaki N."/>
            <person name="Shimpo S."/>
            <person name="Takeuchi C."/>
            <person name="Yamada M."/>
            <person name="Tabata S."/>
        </authorList>
    </citation>
    <scope>NUCLEOTIDE SEQUENCE [LARGE SCALE GENOMIC DNA]</scope>
    <source>
        <strain>ATCC 29082 / PCC 7421</strain>
    </source>
</reference>
<dbReference type="EMBL" id="BA000045">
    <property type="protein sequence ID" value="BAC90152.1"/>
    <property type="molecule type" value="Genomic_DNA"/>
</dbReference>
<dbReference type="RefSeq" id="NP_925157.1">
    <property type="nucleotide sequence ID" value="NC_005125.1"/>
</dbReference>
<dbReference type="RefSeq" id="WP_011142208.1">
    <property type="nucleotide sequence ID" value="NC_005125.1"/>
</dbReference>
<dbReference type="SMR" id="Q7NIH2"/>
<dbReference type="FunCoup" id="Q7NIH2">
    <property type="interactions" value="1"/>
</dbReference>
<dbReference type="STRING" id="251221.gene:10759706"/>
<dbReference type="EnsemblBacteria" id="BAC90152">
    <property type="protein sequence ID" value="BAC90152"/>
    <property type="gene ID" value="BAC90152"/>
</dbReference>
<dbReference type="KEGG" id="gvi:gll2211"/>
<dbReference type="eggNOG" id="COG0239">
    <property type="taxonomic scope" value="Bacteria"/>
</dbReference>
<dbReference type="HOGENOM" id="CLU_114342_3_0_3"/>
<dbReference type="InParanoid" id="Q7NIH2"/>
<dbReference type="OrthoDB" id="9815830at2"/>
<dbReference type="Proteomes" id="UP000000557">
    <property type="component" value="Chromosome"/>
</dbReference>
<dbReference type="GO" id="GO:0005886">
    <property type="term" value="C:plasma membrane"/>
    <property type="evidence" value="ECO:0000318"/>
    <property type="project" value="GO_Central"/>
</dbReference>
<dbReference type="GO" id="GO:0062054">
    <property type="term" value="F:fluoride channel activity"/>
    <property type="evidence" value="ECO:0007669"/>
    <property type="project" value="UniProtKB-UniRule"/>
</dbReference>
<dbReference type="GO" id="GO:1903425">
    <property type="term" value="F:fluoride transmembrane transporter activity"/>
    <property type="evidence" value="ECO:0000318"/>
    <property type="project" value="GO_Central"/>
</dbReference>
<dbReference type="GO" id="GO:0046872">
    <property type="term" value="F:metal ion binding"/>
    <property type="evidence" value="ECO:0007669"/>
    <property type="project" value="UniProtKB-KW"/>
</dbReference>
<dbReference type="GO" id="GO:0140114">
    <property type="term" value="P:cellular detoxification of fluoride"/>
    <property type="evidence" value="ECO:0007669"/>
    <property type="project" value="UniProtKB-UniRule"/>
</dbReference>
<dbReference type="GO" id="GO:1903424">
    <property type="term" value="P:fluoride transmembrane transport"/>
    <property type="evidence" value="ECO:0000318"/>
    <property type="project" value="GO_Central"/>
</dbReference>
<dbReference type="HAMAP" id="MF_00454">
    <property type="entry name" value="FluC"/>
    <property type="match status" value="1"/>
</dbReference>
<dbReference type="InterPro" id="IPR003691">
    <property type="entry name" value="FluC"/>
</dbReference>
<dbReference type="NCBIfam" id="TIGR00494">
    <property type="entry name" value="crcB"/>
    <property type="match status" value="1"/>
</dbReference>
<dbReference type="PANTHER" id="PTHR28259">
    <property type="entry name" value="FLUORIDE EXPORT PROTEIN 1-RELATED"/>
    <property type="match status" value="1"/>
</dbReference>
<dbReference type="PANTHER" id="PTHR28259:SF1">
    <property type="entry name" value="FLUORIDE EXPORT PROTEIN 1-RELATED"/>
    <property type="match status" value="1"/>
</dbReference>
<dbReference type="Pfam" id="PF02537">
    <property type="entry name" value="CRCB"/>
    <property type="match status" value="1"/>
</dbReference>
<name>FLUC_GLOVI</name>
<evidence type="ECO:0000255" key="1">
    <source>
        <dbReference type="HAMAP-Rule" id="MF_00454"/>
    </source>
</evidence>
<gene>
    <name evidence="1" type="primary">fluC</name>
    <name evidence="1" type="synonym">crcB</name>
    <name type="ordered locus">gll2211</name>
</gene>